<name>NRAM_I80AD</name>
<accession>Q20NV8</accession>
<organismHost>
    <name type="scientific">Aves</name>
    <dbReference type="NCBI Taxonomy" id="8782"/>
</organismHost>
<sequence>MNPNQKIICISATGMTLSVVSLLVGIANLGLNIGLHYKVGYTPDVNTPNVNGTNSTTTTIINNNTQNNFTNITNIIQNKNEERTFLNLTKPLCEVNSWHILSKDNAIRIGEDANILVTREPYLSCDPQGCRMFALSQGTTLKGRHANGTIHDRSPFRALVSWEMGQAPSPYNAKIECIGWSSTSCHDGISRMSICMSGPNNNASAVVWYGGRPVTEIPSWAGNILRTQESECVCHKGICPVVMTDGPANNKAATKIIYFKEGKIQKIEELTGTAQHIEECSCYGAKEVIKCICRDNWKGANRPVITIDPDMMTHTSKYLCSKILTDTSRPNDPNNGNCDAPITGGGPDPGVKGFAFLDGENSWLGRTISKDSRSGYEVLKVPNAETNTQSGPITHQIIVNNQNWSGYSGAFIDYWANKECFNPCFYVELIRGRPKESSVLWTSNSIVALCGSRERLGSWSWHDGAEITYFK</sequence>
<evidence type="ECO:0000255" key="1">
    <source>
        <dbReference type="HAMAP-Rule" id="MF_04071"/>
    </source>
</evidence>
<gene>
    <name evidence="1" type="primary">NA</name>
</gene>
<organism>
    <name type="scientific">Influenza A virus (strain A/Gull/Minnesota/945/1980 H13N6)</name>
    <dbReference type="NCBI Taxonomy" id="385597"/>
    <lineage>
        <taxon>Viruses</taxon>
        <taxon>Riboviria</taxon>
        <taxon>Orthornavirae</taxon>
        <taxon>Negarnaviricota</taxon>
        <taxon>Polyploviricotina</taxon>
        <taxon>Insthoviricetes</taxon>
        <taxon>Articulavirales</taxon>
        <taxon>Orthomyxoviridae</taxon>
        <taxon>Alphainfluenzavirus</taxon>
        <taxon>Alphainfluenzavirus influenzae</taxon>
        <taxon>Influenza A virus</taxon>
    </lineage>
</organism>
<protein>
    <recommendedName>
        <fullName evidence="1">Neuraminidase</fullName>
        <ecNumber evidence="1">3.2.1.18</ecNumber>
    </recommendedName>
</protein>
<comment type="function">
    <text evidence="1">Catalyzes the removal of terminal sialic acid residues from viral and cellular glycoconjugates. Cleaves off the terminal sialic acids on the glycosylated HA during virus budding to facilitate virus release. Additionally helps virus spread through the circulation by further removing sialic acids from the cell surface. These cleavages prevent self-aggregation and ensure the efficient spread of the progeny virus from cell to cell. Otherwise, infection would be limited to one round of replication. Described as a receptor-destroying enzyme because it cleaves a terminal sialic acid from the cellular receptors. May facilitate viral invasion of the upper airways by cleaving the sialic acid moieties on the mucin of the airway epithelial cells. Likely to plays a role in the budding process through its association with lipid rafts during intracellular transport. May additionally display a raft-association independent effect on budding. Plays a role in the determination of host range restriction on replication and virulence. Sialidase activity in late endosome/lysosome traffic seems to enhance virus replication.</text>
</comment>
<comment type="catalytic activity">
    <reaction evidence="1">
        <text>Hydrolysis of alpha-(2-&gt;3)-, alpha-(2-&gt;6)-, alpha-(2-&gt;8)- glycosidic linkages of terminal sialic acid residues in oligosaccharides, glycoproteins, glycolipids, colominic acid and synthetic substrates.</text>
        <dbReference type="EC" id="3.2.1.18"/>
    </reaction>
</comment>
<comment type="cofactor">
    <cofactor evidence="1">
        <name>Ca(2+)</name>
        <dbReference type="ChEBI" id="CHEBI:29108"/>
    </cofactor>
</comment>
<comment type="activity regulation">
    <text evidence="1">Inhibited by the neuraminidase inhibitors zanamivir (Relenza) and oseltamivir (Tamiflu). These drugs interfere with the release of progeny virus from infected cells and are effective against all influenza strains. Resistance to neuraminidase inhibitors is quite rare.</text>
</comment>
<comment type="subunit">
    <text evidence="1">Homotetramer.</text>
</comment>
<comment type="subcellular location">
    <subcellularLocation>
        <location evidence="1">Virion membrane</location>
    </subcellularLocation>
    <subcellularLocation>
        <location evidence="1">Host apical cell membrane</location>
        <topology evidence="1">Single-pass type II membrane protein</topology>
    </subcellularLocation>
    <text evidence="1">Preferentially accumulates at the apical plasma membrane in infected polarized epithelial cells, which is the virus assembly site. Uses lipid rafts for cell surface transport and apical sorting. In the virion, forms a mushroom-shaped spike on the surface of the membrane.</text>
</comment>
<comment type="domain">
    <text evidence="1">Intact N-terminus is essential for virion morphogenesis. Possesses two apical sorting signals, one in the ectodomain, which is likely to be a glycan, and the other in the transmembrane domain. The transmembrane domain also plays a role in lipid raft association.</text>
</comment>
<comment type="PTM">
    <text evidence="1">N-glycosylated.</text>
</comment>
<comment type="miscellaneous">
    <text>The influenza A genome consist of 8 RNA segments. Genetic variation of hemagglutinin and/or neuraminidase genes results in the emergence of new influenza strains. The mechanism of variation can be the result of point mutations or the result of genetic reassortment between segments of two different strains.</text>
</comment>
<comment type="similarity">
    <text evidence="1">Belongs to the glycosyl hydrolase 34 family.</text>
</comment>
<dbReference type="EC" id="3.2.1.18" evidence="1"/>
<dbReference type="EMBL" id="CY005860">
    <property type="protein sequence ID" value="ABB21764.1"/>
    <property type="molecule type" value="Genomic_RNA"/>
</dbReference>
<dbReference type="SMR" id="Q20NV8"/>
<dbReference type="GlyCosmos" id="Q20NV8">
    <property type="glycosylation" value="9 sites, No reported glycans"/>
</dbReference>
<dbReference type="PRO" id="PR:Q20NV8"/>
<dbReference type="Proteomes" id="UP000008581">
    <property type="component" value="Genome"/>
</dbReference>
<dbReference type="GO" id="GO:0020002">
    <property type="term" value="C:host cell plasma membrane"/>
    <property type="evidence" value="ECO:0007669"/>
    <property type="project" value="UniProtKB-SubCell"/>
</dbReference>
<dbReference type="GO" id="GO:0016020">
    <property type="term" value="C:membrane"/>
    <property type="evidence" value="ECO:0007669"/>
    <property type="project" value="UniProtKB-UniRule"/>
</dbReference>
<dbReference type="GO" id="GO:0055036">
    <property type="term" value="C:virion membrane"/>
    <property type="evidence" value="ECO:0007669"/>
    <property type="project" value="UniProtKB-SubCell"/>
</dbReference>
<dbReference type="GO" id="GO:0004308">
    <property type="term" value="F:exo-alpha-sialidase activity"/>
    <property type="evidence" value="ECO:0007669"/>
    <property type="project" value="UniProtKB-UniRule"/>
</dbReference>
<dbReference type="GO" id="GO:0046872">
    <property type="term" value="F:metal ion binding"/>
    <property type="evidence" value="ECO:0007669"/>
    <property type="project" value="UniProtKB-UniRule"/>
</dbReference>
<dbReference type="GO" id="GO:0005975">
    <property type="term" value="P:carbohydrate metabolic process"/>
    <property type="evidence" value="ECO:0007669"/>
    <property type="project" value="InterPro"/>
</dbReference>
<dbReference type="GO" id="GO:0046761">
    <property type="term" value="P:viral budding from plasma membrane"/>
    <property type="evidence" value="ECO:0007669"/>
    <property type="project" value="UniProtKB-UniRule"/>
</dbReference>
<dbReference type="Gene3D" id="2.120.10.10">
    <property type="match status" value="1"/>
</dbReference>
<dbReference type="HAMAP" id="MF_04071">
    <property type="entry name" value="INFV_NRAM"/>
    <property type="match status" value="1"/>
</dbReference>
<dbReference type="InterPro" id="IPR001860">
    <property type="entry name" value="Glyco_hydro_34"/>
</dbReference>
<dbReference type="InterPro" id="IPR036278">
    <property type="entry name" value="Sialidase_sf"/>
</dbReference>
<dbReference type="Pfam" id="PF00064">
    <property type="entry name" value="Neur"/>
    <property type="match status" value="1"/>
</dbReference>
<dbReference type="SUPFAM" id="SSF50939">
    <property type="entry name" value="Sialidases"/>
    <property type="match status" value="1"/>
</dbReference>
<reference key="1">
    <citation type="journal article" date="2006" name="Science">
        <title>Large-scale sequence analysis of avian influenza isolates.</title>
        <authorList>
            <person name="Obenauer J.C."/>
            <person name="Denson J."/>
            <person name="Mehta P.K."/>
            <person name="Su X."/>
            <person name="Mukatira S."/>
            <person name="Finkelstein D.B."/>
            <person name="Xu X."/>
            <person name="Wang J."/>
            <person name="Ma J."/>
            <person name="Fan Y."/>
            <person name="Rakestraw K.M."/>
            <person name="Webster R.G."/>
            <person name="Hoffmann E."/>
            <person name="Krauss S."/>
            <person name="Zheng J."/>
            <person name="Zhang Z."/>
            <person name="Naeve C.W."/>
        </authorList>
    </citation>
    <scope>NUCLEOTIDE SEQUENCE [GENOMIC RNA]</scope>
</reference>
<reference key="2">
    <citation type="journal article" date="2004" name="Virus Res.">
        <title>Assembly and budding of influenza virus.</title>
        <authorList>
            <person name="Nayak D.P."/>
            <person name="Hui E.K."/>
            <person name="Barman S."/>
        </authorList>
    </citation>
    <scope>REVIEW</scope>
</reference>
<reference key="3">
    <citation type="journal article" date="2005" name="N. Engl. J. Med.">
        <title>Neuraminidase inhibitors for influenza.</title>
        <authorList>
            <person name="Moscona A."/>
        </authorList>
    </citation>
    <scope>REVIEW</scope>
</reference>
<reference key="4">
    <citation type="journal article" date="2005" name="Biol. Pharm. Bull.">
        <title>Sialobiology of influenza: molecular mechanism of host range variation of influenza viruses.</title>
        <authorList>
            <person name="Suzuki Y."/>
        </authorList>
    </citation>
    <scope>REVIEW</scope>
</reference>
<feature type="chain" id="PRO_0000280135" description="Neuraminidase">
    <location>
        <begin position="1"/>
        <end position="471"/>
    </location>
</feature>
<feature type="topological domain" description="Intravirion" evidence="1">
    <location>
        <begin position="1"/>
        <end position="6"/>
    </location>
</feature>
<feature type="transmembrane region" description="Helical" evidence="1">
    <location>
        <begin position="7"/>
        <end position="27"/>
    </location>
</feature>
<feature type="topological domain" description="Virion surface" evidence="1">
    <location>
        <begin position="28"/>
        <end position="471"/>
    </location>
</feature>
<feature type="region of interest" description="Involved in apical transport and lipid raft association" evidence="1">
    <location>
        <begin position="11"/>
        <end position="33"/>
    </location>
</feature>
<feature type="region of interest" description="Hypervariable stalk region" evidence="1">
    <location>
        <begin position="36"/>
        <end position="89"/>
    </location>
</feature>
<feature type="region of interest" description="Head of neuraminidase" evidence="1">
    <location>
        <begin position="92"/>
        <end position="471"/>
    </location>
</feature>
<feature type="active site" description="Proton donor/acceptor" evidence="1">
    <location>
        <position position="152"/>
    </location>
</feature>
<feature type="active site" description="Nucleophile" evidence="1">
    <location>
        <position position="407"/>
    </location>
</feature>
<feature type="binding site" evidence="1">
    <location>
        <position position="119"/>
    </location>
    <ligand>
        <name>substrate</name>
    </ligand>
</feature>
<feature type="binding site" evidence="1">
    <location>
        <position position="153"/>
    </location>
    <ligand>
        <name>substrate</name>
    </ligand>
</feature>
<feature type="binding site" evidence="1">
    <location>
        <begin position="278"/>
        <end position="279"/>
    </location>
    <ligand>
        <name>substrate</name>
    </ligand>
</feature>
<feature type="binding site" evidence="1">
    <location>
        <position position="294"/>
    </location>
    <ligand>
        <name>substrate</name>
    </ligand>
</feature>
<feature type="binding site" evidence="1">
    <location>
        <position position="295"/>
    </location>
    <ligand>
        <name>Ca(2+)</name>
        <dbReference type="ChEBI" id="CHEBI:29108"/>
    </ligand>
</feature>
<feature type="binding site" evidence="1">
    <location>
        <position position="299"/>
    </location>
    <ligand>
        <name>Ca(2+)</name>
        <dbReference type="ChEBI" id="CHEBI:29108"/>
    </ligand>
</feature>
<feature type="binding site" evidence="1">
    <location>
        <position position="326"/>
    </location>
    <ligand>
        <name>Ca(2+)</name>
        <dbReference type="ChEBI" id="CHEBI:29108"/>
    </ligand>
</feature>
<feature type="binding site" evidence="1">
    <location>
        <position position="373"/>
    </location>
    <ligand>
        <name>substrate</name>
    </ligand>
</feature>
<feature type="glycosylation site" description="N-linked (GlcNAc...) asparagine; by host" evidence="1">
    <location>
        <position position="51"/>
    </location>
</feature>
<feature type="glycosylation site" description="N-linked (GlcNAc...) asparagine; by host" evidence="1">
    <location>
        <position position="54"/>
    </location>
</feature>
<feature type="glycosylation site" description="N-linked (GlcNAc...) asparagine; by host" evidence="1">
    <location>
        <position position="63"/>
    </location>
</feature>
<feature type="glycosylation site" description="N-linked (GlcNAc...) asparagine; by host" evidence="1">
    <location>
        <position position="68"/>
    </location>
</feature>
<feature type="glycosylation site" description="N-linked (GlcNAc...) asparagine; by host" evidence="1">
    <location>
        <position position="71"/>
    </location>
</feature>
<feature type="glycosylation site" description="N-linked (GlcNAc...) asparagine; by host" evidence="1">
    <location>
        <position position="87"/>
    </location>
</feature>
<feature type="glycosylation site" description="N-linked (GlcNAc...) asparagine; by host" evidence="1">
    <location>
        <position position="147"/>
    </location>
</feature>
<feature type="glycosylation site" description="N-linked (GlcNAc...) asparagine; by host" evidence="1">
    <location>
        <position position="202"/>
    </location>
</feature>
<feature type="glycosylation site" description="N-linked (GlcNAc...) asparagine; by host" evidence="1">
    <location>
        <position position="403"/>
    </location>
</feature>
<feature type="disulfide bond" evidence="1">
    <location>
        <begin position="93"/>
        <end position="420"/>
    </location>
</feature>
<feature type="disulfide bond" evidence="1">
    <location>
        <begin position="125"/>
        <end position="130"/>
    </location>
</feature>
<feature type="disulfide bond" evidence="1">
    <location>
        <begin position="185"/>
        <end position="232"/>
    </location>
</feature>
<feature type="disulfide bond" evidence="1">
    <location>
        <begin position="234"/>
        <end position="239"/>
    </location>
</feature>
<feature type="disulfide bond" evidence="1">
    <location>
        <begin position="280"/>
        <end position="293"/>
    </location>
</feature>
<feature type="disulfide bond" evidence="1">
    <location>
        <begin position="282"/>
        <end position="291"/>
    </location>
</feature>
<feature type="disulfide bond" evidence="1">
    <location>
        <begin position="320"/>
        <end position="338"/>
    </location>
</feature>
<feature type="disulfide bond" evidence="1">
    <location>
        <begin position="424"/>
        <end position="450"/>
    </location>
</feature>
<proteinExistence type="inferred from homology"/>
<keyword id="KW-0106">Calcium</keyword>
<keyword id="KW-1015">Disulfide bond</keyword>
<keyword id="KW-0325">Glycoprotein</keyword>
<keyword id="KW-0326">Glycosidase</keyword>
<keyword id="KW-1032">Host cell membrane</keyword>
<keyword id="KW-1043">Host membrane</keyword>
<keyword id="KW-0378">Hydrolase</keyword>
<keyword id="KW-0472">Membrane</keyword>
<keyword id="KW-0479">Metal-binding</keyword>
<keyword id="KW-0735">Signal-anchor</keyword>
<keyword id="KW-0812">Transmembrane</keyword>
<keyword id="KW-1133">Transmembrane helix</keyword>
<keyword id="KW-0946">Virion</keyword>